<accession>B0K3Y0</accession>
<organism>
    <name type="scientific">Thermoanaerobacter sp. (strain X514)</name>
    <dbReference type="NCBI Taxonomy" id="399726"/>
    <lineage>
        <taxon>Bacteria</taxon>
        <taxon>Bacillati</taxon>
        <taxon>Bacillota</taxon>
        <taxon>Clostridia</taxon>
        <taxon>Thermoanaerobacterales</taxon>
        <taxon>Thermoanaerobacteraceae</taxon>
        <taxon>Thermoanaerobacter</taxon>
    </lineage>
</organism>
<evidence type="ECO:0000255" key="1">
    <source>
        <dbReference type="HAMAP-Rule" id="MF_00332"/>
    </source>
</evidence>
<evidence type="ECO:0000256" key="2">
    <source>
        <dbReference type="SAM" id="MobiDB-lite"/>
    </source>
</evidence>
<reference key="1">
    <citation type="submission" date="2008-01" db="EMBL/GenBank/DDBJ databases">
        <title>Complete sequence of Thermoanaerobacter sp. X514.</title>
        <authorList>
            <consortium name="US DOE Joint Genome Institute"/>
            <person name="Copeland A."/>
            <person name="Lucas S."/>
            <person name="Lapidus A."/>
            <person name="Barry K."/>
            <person name="Glavina del Rio T."/>
            <person name="Dalin E."/>
            <person name="Tice H."/>
            <person name="Pitluck S."/>
            <person name="Bruce D."/>
            <person name="Goodwin L."/>
            <person name="Saunders E."/>
            <person name="Brettin T."/>
            <person name="Detter J.C."/>
            <person name="Han C."/>
            <person name="Schmutz J."/>
            <person name="Larimer F."/>
            <person name="Land M."/>
            <person name="Hauser L."/>
            <person name="Kyrpides N."/>
            <person name="Kim E."/>
            <person name="Hemme C."/>
            <person name="Fields M.W."/>
            <person name="He Z."/>
            <person name="Zhou J."/>
            <person name="Richardson P."/>
        </authorList>
    </citation>
    <scope>NUCLEOTIDE SEQUENCE [LARGE SCALE GENOMIC DNA]</scope>
    <source>
        <strain>X514</strain>
    </source>
</reference>
<name>DNAK_THEPX</name>
<keyword id="KW-0067">ATP-binding</keyword>
<keyword id="KW-0143">Chaperone</keyword>
<keyword id="KW-0547">Nucleotide-binding</keyword>
<keyword id="KW-0597">Phosphoprotein</keyword>
<keyword id="KW-0346">Stress response</keyword>
<protein>
    <recommendedName>
        <fullName evidence="1">Chaperone protein DnaK</fullName>
    </recommendedName>
    <alternativeName>
        <fullName evidence="1">HSP70</fullName>
    </alternativeName>
    <alternativeName>
        <fullName evidence="1">Heat shock 70 kDa protein</fullName>
    </alternativeName>
    <alternativeName>
        <fullName evidence="1">Heat shock protein 70</fullName>
    </alternativeName>
</protein>
<proteinExistence type="inferred from homology"/>
<sequence length="612" mass="66535">MGKVIGIDLGTTFSCVAVMEGGQPVVIPNAEGARTTPSVVAFTKEGERLVGQVAKRQAIVNPDRTIMSIKRHMGSDYKVKIDDKEYTPQEISAMILQKLKADAEAYLGEKVTQAVITVPAYFNDSQRQATKDAGRIAGLEVLRIINEPTAAALAYGLDKEGNQKIMVYDLGGGTFDVSILEIGEGVFEVLATSGNNHLGGDDFDQRIIDWLADNFKKEHGIDLRNDRMALQRLKDAAERAKIELSSATVTNINLPFITADATGPKHIDVNLTRAKFEELISDLVESTVGPVNQALNDAGLKPSDIDKVLLIGGSTRVPLVQETVKKIMGKEPHKGINPDEAVAIGAAIQAAVLSGEVKDILLLDVTPLSLGIETLGGVFTKIIERNTTIPTRKSQIFTTAADNQTSVEIHVLQGERPMAKDNKTLGRFILSGIPPAPRGVPQIEVTFDIDANGIVHVSAKDLGTGKSQDITITSTTNLSEEEIQRMINEAKQYEEQDRKKKEEIEIRNKADSLIYQAEKTMKDLGDKMTQAEKDEINKEIENVRKALEGSDIEAIKSASEKLSQAFYKVSTRIYQQAGGQTGGATNTDSAGQGTTQDNVYEANYKVEDDDNK</sequence>
<dbReference type="EMBL" id="CP000923">
    <property type="protein sequence ID" value="ABY93351.1"/>
    <property type="molecule type" value="Genomic_DNA"/>
</dbReference>
<dbReference type="RefSeq" id="WP_009052596.1">
    <property type="nucleotide sequence ID" value="NC_010320.1"/>
</dbReference>
<dbReference type="SMR" id="B0K3Y0"/>
<dbReference type="KEGG" id="tex:Teth514_2079"/>
<dbReference type="HOGENOM" id="CLU_005965_2_1_9"/>
<dbReference type="Proteomes" id="UP000002155">
    <property type="component" value="Chromosome"/>
</dbReference>
<dbReference type="GO" id="GO:0005524">
    <property type="term" value="F:ATP binding"/>
    <property type="evidence" value="ECO:0007669"/>
    <property type="project" value="UniProtKB-UniRule"/>
</dbReference>
<dbReference type="GO" id="GO:0140662">
    <property type="term" value="F:ATP-dependent protein folding chaperone"/>
    <property type="evidence" value="ECO:0007669"/>
    <property type="project" value="InterPro"/>
</dbReference>
<dbReference type="GO" id="GO:0051082">
    <property type="term" value="F:unfolded protein binding"/>
    <property type="evidence" value="ECO:0007669"/>
    <property type="project" value="InterPro"/>
</dbReference>
<dbReference type="CDD" id="cd10234">
    <property type="entry name" value="ASKHA_NBD_HSP70_DnaK-like"/>
    <property type="match status" value="1"/>
</dbReference>
<dbReference type="FunFam" id="2.60.34.10:FF:000014">
    <property type="entry name" value="Chaperone protein DnaK HSP70"/>
    <property type="match status" value="1"/>
</dbReference>
<dbReference type="FunFam" id="1.20.1270.10:FF:000001">
    <property type="entry name" value="Molecular chaperone DnaK"/>
    <property type="match status" value="1"/>
</dbReference>
<dbReference type="FunFam" id="3.30.420.40:FF:000071">
    <property type="entry name" value="Molecular chaperone DnaK"/>
    <property type="match status" value="1"/>
</dbReference>
<dbReference type="FunFam" id="3.90.640.10:FF:000003">
    <property type="entry name" value="Molecular chaperone DnaK"/>
    <property type="match status" value="1"/>
</dbReference>
<dbReference type="Gene3D" id="1.20.1270.10">
    <property type="match status" value="1"/>
</dbReference>
<dbReference type="Gene3D" id="3.30.420.40">
    <property type="match status" value="2"/>
</dbReference>
<dbReference type="Gene3D" id="3.90.640.10">
    <property type="entry name" value="Actin, Chain A, domain 4"/>
    <property type="match status" value="1"/>
</dbReference>
<dbReference type="Gene3D" id="2.60.34.10">
    <property type="entry name" value="Substrate Binding Domain Of DNAk, Chain A, domain 1"/>
    <property type="match status" value="1"/>
</dbReference>
<dbReference type="HAMAP" id="MF_00332">
    <property type="entry name" value="DnaK"/>
    <property type="match status" value="1"/>
</dbReference>
<dbReference type="InterPro" id="IPR043129">
    <property type="entry name" value="ATPase_NBD"/>
</dbReference>
<dbReference type="InterPro" id="IPR012725">
    <property type="entry name" value="Chaperone_DnaK"/>
</dbReference>
<dbReference type="InterPro" id="IPR018181">
    <property type="entry name" value="Heat_shock_70_CS"/>
</dbReference>
<dbReference type="InterPro" id="IPR029048">
    <property type="entry name" value="HSP70_C_sf"/>
</dbReference>
<dbReference type="InterPro" id="IPR029047">
    <property type="entry name" value="HSP70_peptide-bd_sf"/>
</dbReference>
<dbReference type="InterPro" id="IPR013126">
    <property type="entry name" value="Hsp_70_fam"/>
</dbReference>
<dbReference type="NCBIfam" id="NF001413">
    <property type="entry name" value="PRK00290.1"/>
    <property type="match status" value="1"/>
</dbReference>
<dbReference type="NCBIfam" id="TIGR02350">
    <property type="entry name" value="prok_dnaK"/>
    <property type="match status" value="1"/>
</dbReference>
<dbReference type="PANTHER" id="PTHR19375">
    <property type="entry name" value="HEAT SHOCK PROTEIN 70KDA"/>
    <property type="match status" value="1"/>
</dbReference>
<dbReference type="Pfam" id="PF00012">
    <property type="entry name" value="HSP70"/>
    <property type="match status" value="1"/>
</dbReference>
<dbReference type="PRINTS" id="PR00301">
    <property type="entry name" value="HEATSHOCK70"/>
</dbReference>
<dbReference type="SUPFAM" id="SSF53067">
    <property type="entry name" value="Actin-like ATPase domain"/>
    <property type="match status" value="2"/>
</dbReference>
<dbReference type="SUPFAM" id="SSF100934">
    <property type="entry name" value="Heat shock protein 70kD (HSP70), C-terminal subdomain"/>
    <property type="match status" value="1"/>
</dbReference>
<dbReference type="SUPFAM" id="SSF100920">
    <property type="entry name" value="Heat shock protein 70kD (HSP70), peptide-binding domain"/>
    <property type="match status" value="1"/>
</dbReference>
<dbReference type="PROSITE" id="PS00297">
    <property type="entry name" value="HSP70_1"/>
    <property type="match status" value="1"/>
</dbReference>
<dbReference type="PROSITE" id="PS00329">
    <property type="entry name" value="HSP70_2"/>
    <property type="match status" value="1"/>
</dbReference>
<dbReference type="PROSITE" id="PS01036">
    <property type="entry name" value="HSP70_3"/>
    <property type="match status" value="1"/>
</dbReference>
<feature type="chain" id="PRO_1000119768" description="Chaperone protein DnaK">
    <location>
        <begin position="1"/>
        <end position="612"/>
    </location>
</feature>
<feature type="region of interest" description="Disordered" evidence="2">
    <location>
        <begin position="578"/>
        <end position="612"/>
    </location>
</feature>
<feature type="compositionally biased region" description="Polar residues" evidence="2">
    <location>
        <begin position="586"/>
        <end position="598"/>
    </location>
</feature>
<feature type="modified residue" description="Phosphothreonine; by autocatalysis" evidence="1">
    <location>
        <position position="174"/>
    </location>
</feature>
<comment type="function">
    <text evidence="1">Acts as a chaperone.</text>
</comment>
<comment type="induction">
    <text evidence="1">By stress conditions e.g. heat shock.</text>
</comment>
<comment type="similarity">
    <text evidence="1">Belongs to the heat shock protein 70 family.</text>
</comment>
<gene>
    <name evidence="1" type="primary">dnaK</name>
    <name type="ordered locus">Teth514_2079</name>
</gene>